<dbReference type="EMBL" id="CP000096">
    <property type="protein sequence ID" value="ABB23520.1"/>
    <property type="molecule type" value="Genomic_DNA"/>
</dbReference>
<dbReference type="SMR" id="Q3B561"/>
<dbReference type="STRING" id="319225.Plut_0637"/>
<dbReference type="KEGG" id="plt:Plut_0637"/>
<dbReference type="eggNOG" id="COG1678">
    <property type="taxonomic scope" value="Bacteria"/>
</dbReference>
<dbReference type="HOGENOM" id="CLU_057596_2_1_10"/>
<dbReference type="Proteomes" id="UP000002709">
    <property type="component" value="Chromosome"/>
</dbReference>
<dbReference type="GO" id="GO:0005829">
    <property type="term" value="C:cytosol"/>
    <property type="evidence" value="ECO:0007669"/>
    <property type="project" value="TreeGrafter"/>
</dbReference>
<dbReference type="Gene3D" id="3.40.1740.10">
    <property type="entry name" value="VC0467-like"/>
    <property type="match status" value="1"/>
</dbReference>
<dbReference type="HAMAP" id="MF_00758">
    <property type="entry name" value="UPF0301"/>
    <property type="match status" value="1"/>
</dbReference>
<dbReference type="InterPro" id="IPR003774">
    <property type="entry name" value="AlgH-like"/>
</dbReference>
<dbReference type="PANTHER" id="PTHR30327">
    <property type="entry name" value="UNCHARACTERIZED PROTEIN YQGE"/>
    <property type="match status" value="1"/>
</dbReference>
<dbReference type="PANTHER" id="PTHR30327:SF1">
    <property type="entry name" value="UPF0301 PROTEIN YQGE"/>
    <property type="match status" value="1"/>
</dbReference>
<dbReference type="Pfam" id="PF02622">
    <property type="entry name" value="DUF179"/>
    <property type="match status" value="1"/>
</dbReference>
<dbReference type="SUPFAM" id="SSF143456">
    <property type="entry name" value="VC0467-like"/>
    <property type="match status" value="1"/>
</dbReference>
<accession>Q3B561</accession>
<name>Y637_CHLL3</name>
<reference key="1">
    <citation type="submission" date="2005-08" db="EMBL/GenBank/DDBJ databases">
        <title>Complete sequence of Pelodictyon luteolum DSM 273.</title>
        <authorList>
            <consortium name="US DOE Joint Genome Institute"/>
            <person name="Copeland A."/>
            <person name="Lucas S."/>
            <person name="Lapidus A."/>
            <person name="Barry K."/>
            <person name="Detter J.C."/>
            <person name="Glavina T."/>
            <person name="Hammon N."/>
            <person name="Israni S."/>
            <person name="Pitluck S."/>
            <person name="Bryant D."/>
            <person name="Schmutz J."/>
            <person name="Larimer F."/>
            <person name="Land M."/>
            <person name="Kyrpides N."/>
            <person name="Ivanova N."/>
            <person name="Richardson P."/>
        </authorList>
    </citation>
    <scope>NUCLEOTIDE SEQUENCE [LARGE SCALE GENOMIC DNA]</scope>
    <source>
        <strain>DSM 273 / BCRC 81028 / 2530</strain>
    </source>
</reference>
<protein>
    <recommendedName>
        <fullName evidence="1">UPF0301 protein Plut_0637</fullName>
    </recommendedName>
</protein>
<sequence>MGVFNEYKRLAAGKLLIASANLLESNFKRTVLMMCEHNPQGSLGFILNRPMEFQVREAVAGFDEVDEPLHMGGPVQSNTVHFLHMRGDLIDGSEQILPGLYWGGDREELGYLLNTGVLKPSEIRFFLGYAGWSAGQLEAEFEEGSWYTADATPAMVFSGEYERMWSRTVRSKGGEYQLIANSPELPGLN</sequence>
<feature type="chain" id="PRO_0000258851" description="UPF0301 protein Plut_0637">
    <location>
        <begin position="1"/>
        <end position="189"/>
    </location>
</feature>
<proteinExistence type="inferred from homology"/>
<gene>
    <name type="ordered locus">Plut_0637</name>
</gene>
<evidence type="ECO:0000255" key="1">
    <source>
        <dbReference type="HAMAP-Rule" id="MF_00758"/>
    </source>
</evidence>
<keyword id="KW-1185">Reference proteome</keyword>
<comment type="similarity">
    <text evidence="1">Belongs to the UPF0301 (AlgH) family.</text>
</comment>
<organism>
    <name type="scientific">Chlorobium luteolum (strain DSM 273 / BCRC 81028 / 2530)</name>
    <name type="common">Pelodictyon luteolum</name>
    <dbReference type="NCBI Taxonomy" id="319225"/>
    <lineage>
        <taxon>Bacteria</taxon>
        <taxon>Pseudomonadati</taxon>
        <taxon>Chlorobiota</taxon>
        <taxon>Chlorobiia</taxon>
        <taxon>Chlorobiales</taxon>
        <taxon>Chlorobiaceae</taxon>
        <taxon>Chlorobium/Pelodictyon group</taxon>
        <taxon>Pelodictyon</taxon>
    </lineage>
</organism>